<organism>
    <name type="scientific">Rickettsia canadensis (strain McKiel)</name>
    <dbReference type="NCBI Taxonomy" id="293613"/>
    <lineage>
        <taxon>Bacteria</taxon>
        <taxon>Pseudomonadati</taxon>
        <taxon>Pseudomonadota</taxon>
        <taxon>Alphaproteobacteria</taxon>
        <taxon>Rickettsiales</taxon>
        <taxon>Rickettsiaceae</taxon>
        <taxon>Rickettsieae</taxon>
        <taxon>Rickettsia</taxon>
        <taxon>belli group</taxon>
    </lineage>
</organism>
<proteinExistence type="inferred from homology"/>
<evidence type="ECO:0000255" key="1">
    <source>
        <dbReference type="HAMAP-Rule" id="MF_00206"/>
    </source>
</evidence>
<evidence type="ECO:0000255" key="2">
    <source>
        <dbReference type="PROSITE-ProRule" id="PRU01266"/>
    </source>
</evidence>
<gene>
    <name evidence="1" type="primary">lipA</name>
    <name type="ordered locus">A1E_04770</name>
</gene>
<sequence>MANLNKRPDWIKVKAPNSVEYYNTKDLIKNLRLNTVCEEAACPNIGECWSKKHATMMILGSVCTRACRFCNVKTGRPDLLDPHEPQRLAEAVQKLNLKHVVITSVDRDDLEDGGALHFAECINEIRKSSPNTTVEILTPDFLRKEGAAEIIAHSKPDVFNHNVETVPSLYKTIRPGARYYNSLSLLHSIKKLSSEIFTKSGMMVGLGEKISEVIQVMDDLREAKVDFLTIGQYLQPTKDHAEVAKYVTPEEFKYLERVARTKGFLMVSASPLTRSSYHADEDFQKLKQNYRQSLVS</sequence>
<accession>A8EZU2</accession>
<keyword id="KW-0004">4Fe-4S</keyword>
<keyword id="KW-0963">Cytoplasm</keyword>
<keyword id="KW-0408">Iron</keyword>
<keyword id="KW-0411">Iron-sulfur</keyword>
<keyword id="KW-0479">Metal-binding</keyword>
<keyword id="KW-0949">S-adenosyl-L-methionine</keyword>
<keyword id="KW-0808">Transferase</keyword>
<name>LIPA_RICCK</name>
<comment type="function">
    <text evidence="1">Catalyzes the radical-mediated insertion of two sulfur atoms into the C-6 and C-8 positions of the octanoyl moiety bound to the lipoyl domains of lipoate-dependent enzymes, thereby converting the octanoylated domains into lipoylated derivatives.</text>
</comment>
<comment type="catalytic activity">
    <reaction evidence="1">
        <text>[[Fe-S] cluster scaffold protein carrying a second [4Fe-4S](2+) cluster] + N(6)-octanoyl-L-lysyl-[protein] + 2 oxidized [2Fe-2S]-[ferredoxin] + 2 S-adenosyl-L-methionine + 4 H(+) = [[Fe-S] cluster scaffold protein] + N(6)-[(R)-dihydrolipoyl]-L-lysyl-[protein] + 4 Fe(3+) + 2 hydrogen sulfide + 2 5'-deoxyadenosine + 2 L-methionine + 2 reduced [2Fe-2S]-[ferredoxin]</text>
        <dbReference type="Rhea" id="RHEA:16585"/>
        <dbReference type="Rhea" id="RHEA-COMP:9928"/>
        <dbReference type="Rhea" id="RHEA-COMP:10000"/>
        <dbReference type="Rhea" id="RHEA-COMP:10001"/>
        <dbReference type="Rhea" id="RHEA-COMP:10475"/>
        <dbReference type="Rhea" id="RHEA-COMP:14568"/>
        <dbReference type="Rhea" id="RHEA-COMP:14569"/>
        <dbReference type="ChEBI" id="CHEBI:15378"/>
        <dbReference type="ChEBI" id="CHEBI:17319"/>
        <dbReference type="ChEBI" id="CHEBI:29034"/>
        <dbReference type="ChEBI" id="CHEBI:29919"/>
        <dbReference type="ChEBI" id="CHEBI:33722"/>
        <dbReference type="ChEBI" id="CHEBI:33737"/>
        <dbReference type="ChEBI" id="CHEBI:33738"/>
        <dbReference type="ChEBI" id="CHEBI:57844"/>
        <dbReference type="ChEBI" id="CHEBI:59789"/>
        <dbReference type="ChEBI" id="CHEBI:78809"/>
        <dbReference type="ChEBI" id="CHEBI:83100"/>
        <dbReference type="EC" id="2.8.1.8"/>
    </reaction>
</comment>
<comment type="cofactor">
    <cofactor evidence="1">
        <name>[4Fe-4S] cluster</name>
        <dbReference type="ChEBI" id="CHEBI:49883"/>
    </cofactor>
    <text evidence="1">Binds 2 [4Fe-4S] clusters per subunit. One cluster is coordinated with 3 cysteines and an exchangeable S-adenosyl-L-methionine.</text>
</comment>
<comment type="pathway">
    <text evidence="1">Protein modification; protein lipoylation via endogenous pathway; protein N(6)-(lipoyl)lysine from octanoyl-[acyl-carrier-protein]: step 2/2.</text>
</comment>
<comment type="subcellular location">
    <subcellularLocation>
        <location evidence="1">Cytoplasm</location>
    </subcellularLocation>
</comment>
<comment type="similarity">
    <text evidence="1">Belongs to the radical SAM superfamily. Lipoyl synthase family.</text>
</comment>
<reference key="1">
    <citation type="submission" date="2007-09" db="EMBL/GenBank/DDBJ databases">
        <title>Complete genome sequence of Rickettsia canadensis.</title>
        <authorList>
            <person name="Madan A."/>
            <person name="Fahey J."/>
            <person name="Helton E."/>
            <person name="Ketteman M."/>
            <person name="Madan A."/>
            <person name="Rodrigues S."/>
            <person name="Sanchez A."/>
            <person name="Whiting M."/>
            <person name="Dasch G."/>
            <person name="Eremeeva M."/>
        </authorList>
    </citation>
    <scope>NUCLEOTIDE SEQUENCE [LARGE SCALE GENOMIC DNA]</scope>
    <source>
        <strain>McKiel</strain>
    </source>
</reference>
<protein>
    <recommendedName>
        <fullName evidence="1">Lipoyl synthase</fullName>
        <ecNumber evidence="1">2.8.1.8</ecNumber>
    </recommendedName>
    <alternativeName>
        <fullName evidence="1">Lip-syn</fullName>
        <shortName evidence="1">LS</shortName>
    </alternativeName>
    <alternativeName>
        <fullName evidence="1">Lipoate synthase</fullName>
    </alternativeName>
    <alternativeName>
        <fullName evidence="1">Lipoic acid synthase</fullName>
    </alternativeName>
    <alternativeName>
        <fullName evidence="1">Sulfur insertion protein LipA</fullName>
    </alternativeName>
</protein>
<feature type="chain" id="PRO_1000012267" description="Lipoyl synthase">
    <location>
        <begin position="1"/>
        <end position="296"/>
    </location>
</feature>
<feature type="domain" description="Radical SAM core" evidence="2">
    <location>
        <begin position="49"/>
        <end position="265"/>
    </location>
</feature>
<feature type="binding site" evidence="1">
    <location>
        <position position="37"/>
    </location>
    <ligand>
        <name>[4Fe-4S] cluster</name>
        <dbReference type="ChEBI" id="CHEBI:49883"/>
        <label>1</label>
    </ligand>
</feature>
<feature type="binding site" evidence="1">
    <location>
        <position position="42"/>
    </location>
    <ligand>
        <name>[4Fe-4S] cluster</name>
        <dbReference type="ChEBI" id="CHEBI:49883"/>
        <label>1</label>
    </ligand>
</feature>
<feature type="binding site" evidence="1">
    <location>
        <position position="48"/>
    </location>
    <ligand>
        <name>[4Fe-4S] cluster</name>
        <dbReference type="ChEBI" id="CHEBI:49883"/>
        <label>1</label>
    </ligand>
</feature>
<feature type="binding site" evidence="1">
    <location>
        <position position="63"/>
    </location>
    <ligand>
        <name>[4Fe-4S] cluster</name>
        <dbReference type="ChEBI" id="CHEBI:49883"/>
        <label>2</label>
        <note>4Fe-4S-S-AdoMet</note>
    </ligand>
</feature>
<feature type="binding site" evidence="1">
    <location>
        <position position="67"/>
    </location>
    <ligand>
        <name>[4Fe-4S] cluster</name>
        <dbReference type="ChEBI" id="CHEBI:49883"/>
        <label>2</label>
        <note>4Fe-4S-S-AdoMet</note>
    </ligand>
</feature>
<feature type="binding site" evidence="1">
    <location>
        <position position="70"/>
    </location>
    <ligand>
        <name>[4Fe-4S] cluster</name>
        <dbReference type="ChEBI" id="CHEBI:49883"/>
        <label>2</label>
        <note>4Fe-4S-S-AdoMet</note>
    </ligand>
</feature>
<feature type="binding site" evidence="1">
    <location>
        <position position="276"/>
    </location>
    <ligand>
        <name>[4Fe-4S] cluster</name>
        <dbReference type="ChEBI" id="CHEBI:49883"/>
        <label>1</label>
    </ligand>
</feature>
<dbReference type="EC" id="2.8.1.8" evidence="1"/>
<dbReference type="EMBL" id="CP000409">
    <property type="protein sequence ID" value="ABV73875.1"/>
    <property type="molecule type" value="Genomic_DNA"/>
</dbReference>
<dbReference type="RefSeq" id="WP_012149070.1">
    <property type="nucleotide sequence ID" value="NC_009879.1"/>
</dbReference>
<dbReference type="SMR" id="A8EZU2"/>
<dbReference type="STRING" id="293613.A1E_04770"/>
<dbReference type="KEGG" id="rcm:A1E_04770"/>
<dbReference type="eggNOG" id="COG0320">
    <property type="taxonomic scope" value="Bacteria"/>
</dbReference>
<dbReference type="HOGENOM" id="CLU_033144_2_1_5"/>
<dbReference type="UniPathway" id="UPA00538">
    <property type="reaction ID" value="UER00593"/>
</dbReference>
<dbReference type="Proteomes" id="UP000007056">
    <property type="component" value="Chromosome"/>
</dbReference>
<dbReference type="GO" id="GO:0005737">
    <property type="term" value="C:cytoplasm"/>
    <property type="evidence" value="ECO:0007669"/>
    <property type="project" value="UniProtKB-SubCell"/>
</dbReference>
<dbReference type="GO" id="GO:0051539">
    <property type="term" value="F:4 iron, 4 sulfur cluster binding"/>
    <property type="evidence" value="ECO:0007669"/>
    <property type="project" value="UniProtKB-UniRule"/>
</dbReference>
<dbReference type="GO" id="GO:0016992">
    <property type="term" value="F:lipoate synthase activity"/>
    <property type="evidence" value="ECO:0007669"/>
    <property type="project" value="UniProtKB-UniRule"/>
</dbReference>
<dbReference type="GO" id="GO:0046872">
    <property type="term" value="F:metal ion binding"/>
    <property type="evidence" value="ECO:0007669"/>
    <property type="project" value="UniProtKB-KW"/>
</dbReference>
<dbReference type="CDD" id="cd01335">
    <property type="entry name" value="Radical_SAM"/>
    <property type="match status" value="1"/>
</dbReference>
<dbReference type="FunFam" id="3.20.20.70:FF:000040">
    <property type="entry name" value="Lipoyl synthase"/>
    <property type="match status" value="1"/>
</dbReference>
<dbReference type="Gene3D" id="3.20.20.70">
    <property type="entry name" value="Aldolase class I"/>
    <property type="match status" value="1"/>
</dbReference>
<dbReference type="HAMAP" id="MF_00206">
    <property type="entry name" value="Lipoyl_synth"/>
    <property type="match status" value="1"/>
</dbReference>
<dbReference type="InterPro" id="IPR013785">
    <property type="entry name" value="Aldolase_TIM"/>
</dbReference>
<dbReference type="InterPro" id="IPR006638">
    <property type="entry name" value="Elp3/MiaA/NifB-like_rSAM"/>
</dbReference>
<dbReference type="InterPro" id="IPR031691">
    <property type="entry name" value="LIAS_N"/>
</dbReference>
<dbReference type="InterPro" id="IPR003698">
    <property type="entry name" value="Lipoyl_synth"/>
</dbReference>
<dbReference type="InterPro" id="IPR007197">
    <property type="entry name" value="rSAM"/>
</dbReference>
<dbReference type="NCBIfam" id="TIGR00510">
    <property type="entry name" value="lipA"/>
    <property type="match status" value="1"/>
</dbReference>
<dbReference type="NCBIfam" id="NF004019">
    <property type="entry name" value="PRK05481.1"/>
    <property type="match status" value="1"/>
</dbReference>
<dbReference type="NCBIfam" id="NF009544">
    <property type="entry name" value="PRK12928.1"/>
    <property type="match status" value="1"/>
</dbReference>
<dbReference type="PANTHER" id="PTHR10949">
    <property type="entry name" value="LIPOYL SYNTHASE"/>
    <property type="match status" value="1"/>
</dbReference>
<dbReference type="PANTHER" id="PTHR10949:SF0">
    <property type="entry name" value="LIPOYL SYNTHASE, MITOCHONDRIAL"/>
    <property type="match status" value="1"/>
</dbReference>
<dbReference type="Pfam" id="PF16881">
    <property type="entry name" value="LIAS_N"/>
    <property type="match status" value="1"/>
</dbReference>
<dbReference type="Pfam" id="PF04055">
    <property type="entry name" value="Radical_SAM"/>
    <property type="match status" value="1"/>
</dbReference>
<dbReference type="PIRSF" id="PIRSF005963">
    <property type="entry name" value="Lipoyl_synth"/>
    <property type="match status" value="1"/>
</dbReference>
<dbReference type="SFLD" id="SFLDF00271">
    <property type="entry name" value="lipoyl_synthase"/>
    <property type="match status" value="1"/>
</dbReference>
<dbReference type="SFLD" id="SFLDS00029">
    <property type="entry name" value="Radical_SAM"/>
    <property type="match status" value="1"/>
</dbReference>
<dbReference type="SMART" id="SM00729">
    <property type="entry name" value="Elp3"/>
    <property type="match status" value="1"/>
</dbReference>
<dbReference type="SUPFAM" id="SSF102114">
    <property type="entry name" value="Radical SAM enzymes"/>
    <property type="match status" value="1"/>
</dbReference>
<dbReference type="PROSITE" id="PS51918">
    <property type="entry name" value="RADICAL_SAM"/>
    <property type="match status" value="1"/>
</dbReference>